<sequence length="276" mass="30713">MSVIKCNPTSPGRRHVVKLVNGGLYKGKPYSSLLSKKVANSSKGRNNYGRITMRHIGSGHKQRYRIIDFKRNKDDVFAVVERMEYDPNRSANIALIVYKDGERRYILAPRNLNVGNKIISGLNVPISPGNSLPLSNIPVGSIIHNVEMKVGKGGQLARSAGTYVQIVSRDGEYIILRLRSGEIRKVRCECRATIGEVGNNEHMLRALGKAGASRWRGIRPTVRGTAMNPIDHPHGGGEGKNFGKHPVSPWGVQTKGKRTRSNKRTDKFILCRRKKK</sequence>
<protein>
    <recommendedName>
        <fullName evidence="1">Large ribosomal subunit protein uL2</fullName>
    </recommendedName>
    <alternativeName>
        <fullName evidence="3">50S ribosomal protein L2</fullName>
    </alternativeName>
</protein>
<evidence type="ECO:0000255" key="1">
    <source>
        <dbReference type="HAMAP-Rule" id="MF_01320"/>
    </source>
</evidence>
<evidence type="ECO:0000256" key="2">
    <source>
        <dbReference type="SAM" id="MobiDB-lite"/>
    </source>
</evidence>
<evidence type="ECO:0000305" key="3"/>
<proteinExistence type="inferred from homology"/>
<gene>
    <name evidence="1" type="primary">rplB</name>
    <name type="ordered locus">Bfl194</name>
</gene>
<reference key="1">
    <citation type="journal article" date="2003" name="Proc. Natl. Acad. Sci. U.S.A.">
        <title>The genome sequence of Blochmannia floridanus: comparative analysis of reduced genomes.</title>
        <authorList>
            <person name="Gil R."/>
            <person name="Silva F.J."/>
            <person name="Zientz E."/>
            <person name="Delmotte F."/>
            <person name="Gonzalez-Candelas F."/>
            <person name="Latorre A."/>
            <person name="Rausell C."/>
            <person name="Kamerbeek J."/>
            <person name="Gadau J."/>
            <person name="Hoelldobler B."/>
            <person name="van Ham R.C.H.J."/>
            <person name="Gross R."/>
            <person name="Moya A."/>
        </authorList>
    </citation>
    <scope>NUCLEOTIDE SEQUENCE [LARGE SCALE GENOMIC DNA]</scope>
</reference>
<comment type="function">
    <text evidence="1">One of the primary rRNA binding proteins. Required for association of the 30S and 50S subunits to form the 70S ribosome, for tRNA binding and peptide bond formation. It has been suggested to have peptidyltransferase activity; this is somewhat controversial. Makes several contacts with the 16S rRNA in the 70S ribosome.</text>
</comment>
<comment type="subunit">
    <text evidence="1">Part of the 50S ribosomal subunit. Forms a bridge to the 30S subunit in the 70S ribosome.</text>
</comment>
<comment type="similarity">
    <text evidence="1">Belongs to the universal ribosomal protein uL2 family.</text>
</comment>
<keyword id="KW-1185">Reference proteome</keyword>
<keyword id="KW-0687">Ribonucleoprotein</keyword>
<keyword id="KW-0689">Ribosomal protein</keyword>
<keyword id="KW-0694">RNA-binding</keyword>
<keyword id="KW-0699">rRNA-binding</keyword>
<name>RL2_BLOFL</name>
<organism>
    <name type="scientific">Blochmanniella floridana</name>
    <dbReference type="NCBI Taxonomy" id="203907"/>
    <lineage>
        <taxon>Bacteria</taxon>
        <taxon>Pseudomonadati</taxon>
        <taxon>Pseudomonadota</taxon>
        <taxon>Gammaproteobacteria</taxon>
        <taxon>Enterobacterales</taxon>
        <taxon>Enterobacteriaceae</taxon>
        <taxon>ant endosymbionts</taxon>
        <taxon>Candidatus Blochmanniella</taxon>
    </lineage>
</organism>
<dbReference type="EMBL" id="BX248583">
    <property type="protein sequence ID" value="CAD83709.1"/>
    <property type="molecule type" value="Genomic_DNA"/>
</dbReference>
<dbReference type="SMR" id="Q7VQE5"/>
<dbReference type="STRING" id="203907.Bfl194"/>
<dbReference type="KEGG" id="bfl:Bfl194"/>
<dbReference type="eggNOG" id="COG0090">
    <property type="taxonomic scope" value="Bacteria"/>
</dbReference>
<dbReference type="HOGENOM" id="CLU_036235_2_1_6"/>
<dbReference type="OrthoDB" id="9778722at2"/>
<dbReference type="Proteomes" id="UP000002192">
    <property type="component" value="Chromosome"/>
</dbReference>
<dbReference type="GO" id="GO:0005829">
    <property type="term" value="C:cytosol"/>
    <property type="evidence" value="ECO:0007669"/>
    <property type="project" value="UniProtKB-ARBA"/>
</dbReference>
<dbReference type="GO" id="GO:0015934">
    <property type="term" value="C:large ribosomal subunit"/>
    <property type="evidence" value="ECO:0007669"/>
    <property type="project" value="InterPro"/>
</dbReference>
<dbReference type="GO" id="GO:0019843">
    <property type="term" value="F:rRNA binding"/>
    <property type="evidence" value="ECO:0007669"/>
    <property type="project" value="UniProtKB-UniRule"/>
</dbReference>
<dbReference type="GO" id="GO:0003735">
    <property type="term" value="F:structural constituent of ribosome"/>
    <property type="evidence" value="ECO:0007669"/>
    <property type="project" value="InterPro"/>
</dbReference>
<dbReference type="GO" id="GO:0016740">
    <property type="term" value="F:transferase activity"/>
    <property type="evidence" value="ECO:0007669"/>
    <property type="project" value="InterPro"/>
</dbReference>
<dbReference type="GO" id="GO:0002181">
    <property type="term" value="P:cytoplasmic translation"/>
    <property type="evidence" value="ECO:0007669"/>
    <property type="project" value="TreeGrafter"/>
</dbReference>
<dbReference type="FunFam" id="2.30.30.30:FF:000001">
    <property type="entry name" value="50S ribosomal protein L2"/>
    <property type="match status" value="1"/>
</dbReference>
<dbReference type="FunFam" id="2.40.50.140:FF:000003">
    <property type="entry name" value="50S ribosomal protein L2"/>
    <property type="match status" value="1"/>
</dbReference>
<dbReference type="FunFam" id="4.10.950.10:FF:000001">
    <property type="entry name" value="50S ribosomal protein L2"/>
    <property type="match status" value="1"/>
</dbReference>
<dbReference type="Gene3D" id="2.30.30.30">
    <property type="match status" value="1"/>
</dbReference>
<dbReference type="Gene3D" id="2.40.50.140">
    <property type="entry name" value="Nucleic acid-binding proteins"/>
    <property type="match status" value="1"/>
</dbReference>
<dbReference type="Gene3D" id="4.10.950.10">
    <property type="entry name" value="Ribosomal protein L2, domain 3"/>
    <property type="match status" value="1"/>
</dbReference>
<dbReference type="HAMAP" id="MF_01320_B">
    <property type="entry name" value="Ribosomal_uL2_B"/>
    <property type="match status" value="1"/>
</dbReference>
<dbReference type="InterPro" id="IPR012340">
    <property type="entry name" value="NA-bd_OB-fold"/>
</dbReference>
<dbReference type="InterPro" id="IPR014722">
    <property type="entry name" value="Rib_uL2_dom2"/>
</dbReference>
<dbReference type="InterPro" id="IPR002171">
    <property type="entry name" value="Ribosomal_uL2"/>
</dbReference>
<dbReference type="InterPro" id="IPR005880">
    <property type="entry name" value="Ribosomal_uL2_bac/org-type"/>
</dbReference>
<dbReference type="InterPro" id="IPR022669">
    <property type="entry name" value="Ribosomal_uL2_C"/>
</dbReference>
<dbReference type="InterPro" id="IPR022671">
    <property type="entry name" value="Ribosomal_uL2_CS"/>
</dbReference>
<dbReference type="InterPro" id="IPR014726">
    <property type="entry name" value="Ribosomal_uL2_dom3"/>
</dbReference>
<dbReference type="InterPro" id="IPR022666">
    <property type="entry name" value="Ribosomal_uL2_RNA-bd_dom"/>
</dbReference>
<dbReference type="InterPro" id="IPR008991">
    <property type="entry name" value="Translation_prot_SH3-like_sf"/>
</dbReference>
<dbReference type="NCBIfam" id="TIGR01171">
    <property type="entry name" value="rplB_bact"/>
    <property type="match status" value="1"/>
</dbReference>
<dbReference type="PANTHER" id="PTHR13691:SF5">
    <property type="entry name" value="LARGE RIBOSOMAL SUBUNIT PROTEIN UL2M"/>
    <property type="match status" value="1"/>
</dbReference>
<dbReference type="PANTHER" id="PTHR13691">
    <property type="entry name" value="RIBOSOMAL PROTEIN L2"/>
    <property type="match status" value="1"/>
</dbReference>
<dbReference type="Pfam" id="PF00181">
    <property type="entry name" value="Ribosomal_L2"/>
    <property type="match status" value="1"/>
</dbReference>
<dbReference type="Pfam" id="PF03947">
    <property type="entry name" value="Ribosomal_L2_C"/>
    <property type="match status" value="1"/>
</dbReference>
<dbReference type="PIRSF" id="PIRSF002158">
    <property type="entry name" value="Ribosomal_L2"/>
    <property type="match status" value="1"/>
</dbReference>
<dbReference type="SMART" id="SM01383">
    <property type="entry name" value="Ribosomal_L2"/>
    <property type="match status" value="1"/>
</dbReference>
<dbReference type="SMART" id="SM01382">
    <property type="entry name" value="Ribosomal_L2_C"/>
    <property type="match status" value="1"/>
</dbReference>
<dbReference type="SUPFAM" id="SSF50249">
    <property type="entry name" value="Nucleic acid-binding proteins"/>
    <property type="match status" value="1"/>
</dbReference>
<dbReference type="SUPFAM" id="SSF50104">
    <property type="entry name" value="Translation proteins SH3-like domain"/>
    <property type="match status" value="1"/>
</dbReference>
<dbReference type="PROSITE" id="PS00467">
    <property type="entry name" value="RIBOSOMAL_L2"/>
    <property type="match status" value="1"/>
</dbReference>
<feature type="chain" id="PRO_0000129543" description="Large ribosomal subunit protein uL2">
    <location>
        <begin position="1"/>
        <end position="276"/>
    </location>
</feature>
<feature type="region of interest" description="Disordered" evidence="2">
    <location>
        <begin position="224"/>
        <end position="265"/>
    </location>
</feature>
<accession>Q7VQE5</accession>